<reference key="1">
    <citation type="journal article" date="2005" name="Taxon">
        <title>Phylogenetic relationships and biogeography of Ranunculus and allied genera (Ranunculaceae) in the Mediterranean region and in the European alpine system.</title>
        <authorList>
            <person name="Paun O."/>
            <person name="Lehnebach C."/>
            <person name="Johansson J.T."/>
            <person name="Lockhart P."/>
            <person name="Hoerandl E."/>
        </authorList>
    </citation>
    <scope>NUCLEOTIDE SEQUENCE [GENOMIC DNA]</scope>
</reference>
<proteinExistence type="inferred from homology"/>
<sequence>MEELQRYLKMDRSRERDFLYPLLFQEYIYALAHDFGLTKSIPYESMQILSYDNKYSSLIVKRLIIRMYQQKHLIILDNDSNQKNFLGHNKNLYSQMISEGFAVIVEIPFALRLVSSYQGKEIEKSINLRSIHSTFPFLEDKFVHLNHVLDILIPYPIHLELLVQNLRCWIQDASFLHLLRFFLYEYHNWNSLTTQKTKQNPLFFKENRRFFLFLYNFHVYESESIFLFLRKKSYHLRSTSSIAFLDRTHFYGKIEHFQVVFRNYFHTILWLFKDPFMHYFRYQGKSIMSSKGTPLLMKKWKYYLVNLWECHFYFWSQPDRIHINQLSNHFLDFLGYLSSVRPNPSVVRNQMLENAFIIDIAINKLDTIVPIIPLIGSLAKAKFCNLSGQPVSKPAWTDSPDSDIIDRFGRICRNVSHYYSGSSKKKTLYRIKYILRLSCARTLARKHKSTVRSFLKRLGSEFLEEFLIEEEQVLSFILPKISSSSQRLSKERVWYFDIIRINDLMDLS</sequence>
<accession>Q507P6</accession>
<organism>
    <name type="scientific">Ranunculus glacialis</name>
    <name type="common">Glacier buttercup</name>
    <dbReference type="NCBI Taxonomy" id="235900"/>
    <lineage>
        <taxon>Eukaryota</taxon>
        <taxon>Viridiplantae</taxon>
        <taxon>Streptophyta</taxon>
        <taxon>Embryophyta</taxon>
        <taxon>Tracheophyta</taxon>
        <taxon>Spermatophyta</taxon>
        <taxon>Magnoliopsida</taxon>
        <taxon>Ranunculales</taxon>
        <taxon>Ranunculaceae</taxon>
        <taxon>Ranunculoideae</taxon>
        <taxon>Ranunculeae</taxon>
        <taxon>Ranunculus</taxon>
    </lineage>
</organism>
<keyword id="KW-0150">Chloroplast</keyword>
<keyword id="KW-0507">mRNA processing</keyword>
<keyword id="KW-0934">Plastid</keyword>
<keyword id="KW-0694">RNA-binding</keyword>
<keyword id="KW-0819">tRNA processing</keyword>
<comment type="function">
    <text evidence="1">Usually encoded in the trnK tRNA gene intron. Probably assists in splicing its own and other chloroplast group II introns.</text>
</comment>
<comment type="subcellular location">
    <subcellularLocation>
        <location>Plastid</location>
        <location>Chloroplast</location>
    </subcellularLocation>
</comment>
<comment type="similarity">
    <text evidence="1">Belongs to the intron maturase 2 family. MatK subfamily.</text>
</comment>
<dbReference type="EMBL" id="AY954219">
    <property type="protein sequence ID" value="AAY21366.1"/>
    <property type="molecule type" value="Genomic_DNA"/>
</dbReference>
<dbReference type="GO" id="GO:0009507">
    <property type="term" value="C:chloroplast"/>
    <property type="evidence" value="ECO:0007669"/>
    <property type="project" value="UniProtKB-SubCell"/>
</dbReference>
<dbReference type="GO" id="GO:0003723">
    <property type="term" value="F:RNA binding"/>
    <property type="evidence" value="ECO:0007669"/>
    <property type="project" value="UniProtKB-KW"/>
</dbReference>
<dbReference type="GO" id="GO:0006397">
    <property type="term" value="P:mRNA processing"/>
    <property type="evidence" value="ECO:0007669"/>
    <property type="project" value="UniProtKB-KW"/>
</dbReference>
<dbReference type="GO" id="GO:0008380">
    <property type="term" value="P:RNA splicing"/>
    <property type="evidence" value="ECO:0007669"/>
    <property type="project" value="UniProtKB-UniRule"/>
</dbReference>
<dbReference type="GO" id="GO:0008033">
    <property type="term" value="P:tRNA processing"/>
    <property type="evidence" value="ECO:0007669"/>
    <property type="project" value="UniProtKB-KW"/>
</dbReference>
<dbReference type="HAMAP" id="MF_01390">
    <property type="entry name" value="MatK"/>
    <property type="match status" value="1"/>
</dbReference>
<dbReference type="InterPro" id="IPR024937">
    <property type="entry name" value="Domain_X"/>
</dbReference>
<dbReference type="InterPro" id="IPR002866">
    <property type="entry name" value="Maturase_MatK"/>
</dbReference>
<dbReference type="InterPro" id="IPR024942">
    <property type="entry name" value="Maturase_MatK_N"/>
</dbReference>
<dbReference type="PANTHER" id="PTHR34811">
    <property type="entry name" value="MATURASE K"/>
    <property type="match status" value="1"/>
</dbReference>
<dbReference type="PANTHER" id="PTHR34811:SF1">
    <property type="entry name" value="MATURASE K"/>
    <property type="match status" value="1"/>
</dbReference>
<dbReference type="Pfam" id="PF01348">
    <property type="entry name" value="Intron_maturas2"/>
    <property type="match status" value="1"/>
</dbReference>
<dbReference type="Pfam" id="PF01824">
    <property type="entry name" value="MatK_N"/>
    <property type="match status" value="1"/>
</dbReference>
<feature type="chain" id="PRO_0000143670" description="Maturase K">
    <location>
        <begin position="1"/>
        <end position="508"/>
    </location>
</feature>
<evidence type="ECO:0000255" key="1">
    <source>
        <dbReference type="HAMAP-Rule" id="MF_01390"/>
    </source>
</evidence>
<protein>
    <recommendedName>
        <fullName evidence="1">Maturase K</fullName>
    </recommendedName>
    <alternativeName>
        <fullName evidence="1">Intron maturase</fullName>
    </alternativeName>
</protein>
<name>MATK_RANGL</name>
<geneLocation type="chloroplast"/>
<gene>
    <name evidence="1" type="primary">matK</name>
</gene>